<gene>
    <name evidence="1" type="primary">nrdR</name>
    <name type="ordered locus">SAV_2462</name>
</gene>
<reference key="1">
    <citation type="journal article" date="2001" name="Proc. Natl. Acad. Sci. U.S.A.">
        <title>Genome sequence of an industrial microorganism Streptomyces avermitilis: deducing the ability of producing secondary metabolites.</title>
        <authorList>
            <person name="Omura S."/>
            <person name="Ikeda H."/>
            <person name="Ishikawa J."/>
            <person name="Hanamoto A."/>
            <person name="Takahashi C."/>
            <person name="Shinose M."/>
            <person name="Takahashi Y."/>
            <person name="Horikawa H."/>
            <person name="Nakazawa H."/>
            <person name="Osonoe T."/>
            <person name="Kikuchi H."/>
            <person name="Shiba T."/>
            <person name="Sakaki Y."/>
            <person name="Hattori M."/>
        </authorList>
    </citation>
    <scope>NUCLEOTIDE SEQUENCE [LARGE SCALE GENOMIC DNA]</scope>
    <source>
        <strain>ATCC 31267 / DSM 46492 / JCM 5070 / NBRC 14893 / NCIMB 12804 / NRRL 8165 / MA-4680</strain>
    </source>
</reference>
<reference key="2">
    <citation type="journal article" date="2003" name="Nat. Biotechnol.">
        <title>Complete genome sequence and comparative analysis of the industrial microorganism Streptomyces avermitilis.</title>
        <authorList>
            <person name="Ikeda H."/>
            <person name="Ishikawa J."/>
            <person name="Hanamoto A."/>
            <person name="Shinose M."/>
            <person name="Kikuchi H."/>
            <person name="Shiba T."/>
            <person name="Sakaki Y."/>
            <person name="Hattori M."/>
            <person name="Omura S."/>
        </authorList>
    </citation>
    <scope>NUCLEOTIDE SEQUENCE [LARGE SCALE GENOMIC DNA]</scope>
    <source>
        <strain>ATCC 31267 / DSM 46492 / JCM 5070 / NBRC 14893 / NCIMB 12804 / NRRL 8165 / MA-4680</strain>
    </source>
</reference>
<dbReference type="EMBL" id="BA000030">
    <property type="protein sequence ID" value="BAC70173.1"/>
    <property type="molecule type" value="Genomic_DNA"/>
</dbReference>
<dbReference type="RefSeq" id="WP_010983899.1">
    <property type="nucleotide sequence ID" value="NZ_JZJK01000086.1"/>
</dbReference>
<dbReference type="SMR" id="Q82KE1"/>
<dbReference type="GeneID" id="41539549"/>
<dbReference type="KEGG" id="sma:SAVERM_2462"/>
<dbReference type="eggNOG" id="COG1327">
    <property type="taxonomic scope" value="Bacteria"/>
</dbReference>
<dbReference type="HOGENOM" id="CLU_108412_1_0_11"/>
<dbReference type="OrthoDB" id="9807461at2"/>
<dbReference type="Proteomes" id="UP000000428">
    <property type="component" value="Chromosome"/>
</dbReference>
<dbReference type="GO" id="GO:0005524">
    <property type="term" value="F:ATP binding"/>
    <property type="evidence" value="ECO:0007669"/>
    <property type="project" value="UniProtKB-KW"/>
</dbReference>
<dbReference type="GO" id="GO:0003677">
    <property type="term" value="F:DNA binding"/>
    <property type="evidence" value="ECO:0007669"/>
    <property type="project" value="UniProtKB-KW"/>
</dbReference>
<dbReference type="GO" id="GO:0008270">
    <property type="term" value="F:zinc ion binding"/>
    <property type="evidence" value="ECO:0007669"/>
    <property type="project" value="UniProtKB-UniRule"/>
</dbReference>
<dbReference type="GO" id="GO:0045892">
    <property type="term" value="P:negative regulation of DNA-templated transcription"/>
    <property type="evidence" value="ECO:0007669"/>
    <property type="project" value="UniProtKB-UniRule"/>
</dbReference>
<dbReference type="HAMAP" id="MF_00440">
    <property type="entry name" value="NrdR"/>
    <property type="match status" value="1"/>
</dbReference>
<dbReference type="InterPro" id="IPR005144">
    <property type="entry name" value="ATP-cone_dom"/>
</dbReference>
<dbReference type="InterPro" id="IPR055173">
    <property type="entry name" value="NrdR-like_N"/>
</dbReference>
<dbReference type="InterPro" id="IPR003796">
    <property type="entry name" value="RNR_NrdR-like"/>
</dbReference>
<dbReference type="NCBIfam" id="TIGR00244">
    <property type="entry name" value="transcriptional regulator NrdR"/>
    <property type="match status" value="1"/>
</dbReference>
<dbReference type="PANTHER" id="PTHR30455">
    <property type="entry name" value="TRANSCRIPTIONAL REPRESSOR NRDR"/>
    <property type="match status" value="1"/>
</dbReference>
<dbReference type="PANTHER" id="PTHR30455:SF2">
    <property type="entry name" value="TRANSCRIPTIONAL REPRESSOR NRDR"/>
    <property type="match status" value="1"/>
</dbReference>
<dbReference type="Pfam" id="PF03477">
    <property type="entry name" value="ATP-cone"/>
    <property type="match status" value="1"/>
</dbReference>
<dbReference type="Pfam" id="PF22811">
    <property type="entry name" value="Zn_ribbon_NrdR"/>
    <property type="match status" value="1"/>
</dbReference>
<dbReference type="PROSITE" id="PS51161">
    <property type="entry name" value="ATP_CONE"/>
    <property type="match status" value="1"/>
</dbReference>
<comment type="function">
    <text evidence="1">Negatively regulates transcription of bacterial ribonucleotide reductase nrd genes and operons by binding to NrdR-boxes.</text>
</comment>
<comment type="cofactor">
    <cofactor evidence="1">
        <name>Zn(2+)</name>
        <dbReference type="ChEBI" id="CHEBI:29105"/>
    </cofactor>
    <text evidence="1">Binds 1 zinc ion.</text>
</comment>
<comment type="similarity">
    <text evidence="1">Belongs to the NrdR family.</text>
</comment>
<protein>
    <recommendedName>
        <fullName evidence="1">Transcriptional repressor NrdR</fullName>
    </recommendedName>
</protein>
<accession>Q82KE1</accession>
<sequence length="187" mass="20617">MHCPFCRHPDSRVVDSRTTDDGTSIRRRRQCPDCSRRFTTVETCSLMVVKRSGVTEPFSRTKVINGVRKACQGRPVTEDALAQLGQRVEEAVRATGSAELTTHDVGLAILGPLRELDLVAYLRFASVYRAFDSLEDFEAAIAELREEQRERPAVDDEDHEDAGAERQGTDRGSGGTVEVPVPATVAD</sequence>
<evidence type="ECO:0000255" key="1">
    <source>
        <dbReference type="HAMAP-Rule" id="MF_00440"/>
    </source>
</evidence>
<evidence type="ECO:0000256" key="2">
    <source>
        <dbReference type="SAM" id="MobiDB-lite"/>
    </source>
</evidence>
<keyword id="KW-0067">ATP-binding</keyword>
<keyword id="KW-0238">DNA-binding</keyword>
<keyword id="KW-0479">Metal-binding</keyword>
<keyword id="KW-0547">Nucleotide-binding</keyword>
<keyword id="KW-1185">Reference proteome</keyword>
<keyword id="KW-0678">Repressor</keyword>
<keyword id="KW-0804">Transcription</keyword>
<keyword id="KW-0805">Transcription regulation</keyword>
<keyword id="KW-0862">Zinc</keyword>
<keyword id="KW-0863">Zinc-finger</keyword>
<proteinExistence type="inferred from homology"/>
<name>NRDR_STRAW</name>
<organism>
    <name type="scientific">Streptomyces avermitilis (strain ATCC 31267 / DSM 46492 / JCM 5070 / NBRC 14893 / NCIMB 12804 / NRRL 8165 / MA-4680)</name>
    <dbReference type="NCBI Taxonomy" id="227882"/>
    <lineage>
        <taxon>Bacteria</taxon>
        <taxon>Bacillati</taxon>
        <taxon>Actinomycetota</taxon>
        <taxon>Actinomycetes</taxon>
        <taxon>Kitasatosporales</taxon>
        <taxon>Streptomycetaceae</taxon>
        <taxon>Streptomyces</taxon>
    </lineage>
</organism>
<feature type="chain" id="PRO_0000182363" description="Transcriptional repressor NrdR">
    <location>
        <begin position="1"/>
        <end position="187"/>
    </location>
</feature>
<feature type="domain" description="ATP-cone" evidence="1">
    <location>
        <begin position="46"/>
        <end position="136"/>
    </location>
</feature>
<feature type="zinc finger region" evidence="1">
    <location>
        <begin position="3"/>
        <end position="34"/>
    </location>
</feature>
<feature type="region of interest" description="Disordered" evidence="2">
    <location>
        <begin position="146"/>
        <end position="187"/>
    </location>
</feature>